<comment type="subcellular location">
    <subcellularLocation>
        <location evidence="3">Secreted</location>
    </subcellularLocation>
</comment>
<keyword id="KW-1015">Disulfide bond</keyword>
<keyword id="KW-0325">Glycoprotein</keyword>
<keyword id="KW-1185">Reference proteome</keyword>
<keyword id="KW-0964">Secreted</keyword>
<keyword id="KW-0732">Signal</keyword>
<protein>
    <recommendedName>
        <fullName evidence="2">Protein PIP-1</fullName>
    </recommendedName>
</protein>
<feature type="signal peptide" evidence="1">
    <location>
        <begin position="1"/>
        <end position="23"/>
    </location>
</feature>
<feature type="chain" id="PRO_0000036173" description="Protein PIP-1">
    <location>
        <begin position="24"/>
        <end position="101"/>
    </location>
</feature>
<feature type="domain" description="UPAR/Ly6" evidence="3">
    <location>
        <begin position="24"/>
        <end position="101"/>
    </location>
</feature>
<feature type="glycosylation site" description="N-linked (GlcNAc...) asparagine" evidence="1">
    <location>
        <position position="84"/>
    </location>
</feature>
<feature type="disulfide bond" evidence="1">
    <location>
        <begin position="26"/>
        <end position="53"/>
    </location>
</feature>
<feature type="disulfide bond" evidence="1">
    <location>
        <begin position="29"/>
        <end position="38"/>
    </location>
</feature>
<feature type="disulfide bond" evidence="1">
    <location>
        <begin position="45"/>
        <end position="71"/>
    </location>
</feature>
<feature type="disulfide bond" evidence="1">
    <location>
        <begin position="75"/>
        <end position="91"/>
    </location>
</feature>
<feature type="disulfide bond" evidence="1">
    <location>
        <begin position="92"/>
        <end position="98"/>
    </location>
</feature>
<accession>P83106</accession>
<organism>
    <name type="scientific">Sus scrofa</name>
    <name type="common">Pig</name>
    <dbReference type="NCBI Taxonomy" id="9823"/>
    <lineage>
        <taxon>Eukaryota</taxon>
        <taxon>Metazoa</taxon>
        <taxon>Chordata</taxon>
        <taxon>Craniata</taxon>
        <taxon>Vertebrata</taxon>
        <taxon>Euteleostomi</taxon>
        <taxon>Mammalia</taxon>
        <taxon>Eutheria</taxon>
        <taxon>Laurasiatheria</taxon>
        <taxon>Artiodactyla</taxon>
        <taxon>Suina</taxon>
        <taxon>Suidae</taxon>
        <taxon>Sus</taxon>
    </lineage>
</organism>
<name>PIP1_PIG</name>
<proteinExistence type="evidence at transcript level"/>
<dbReference type="EMBL" id="BE030916">
    <property type="status" value="NOT_ANNOTATED_CDS"/>
    <property type="molecule type" value="mRNA"/>
</dbReference>
<dbReference type="RefSeq" id="XP_005667540.1">
    <property type="nucleotide sequence ID" value="XM_005667483.2"/>
</dbReference>
<dbReference type="SMR" id="P83106"/>
<dbReference type="FunCoup" id="P83106">
    <property type="interactions" value="16"/>
</dbReference>
<dbReference type="STRING" id="9823.ENSSSCP00000060905"/>
<dbReference type="GlyGen" id="P83106">
    <property type="glycosylation" value="1 site"/>
</dbReference>
<dbReference type="PaxDb" id="9823-ENSSSCP00000016138"/>
<dbReference type="Ensembl" id="ENSSSCT00000016583.5">
    <property type="protein sequence ID" value="ENSSSCP00000016138.2"/>
    <property type="gene ID" value="ENSSSCG00000015217.5"/>
</dbReference>
<dbReference type="Ensembl" id="ENSSSCT00015044632.1">
    <property type="protein sequence ID" value="ENSSSCP00015017638.1"/>
    <property type="gene ID" value="ENSSSCG00015033681.1"/>
</dbReference>
<dbReference type="Ensembl" id="ENSSSCT00025029412.1">
    <property type="protein sequence ID" value="ENSSSCP00025012496.1"/>
    <property type="gene ID" value="ENSSSCG00025021632.1"/>
</dbReference>
<dbReference type="Ensembl" id="ENSSSCT00035045686.1">
    <property type="protein sequence ID" value="ENSSSCP00035018257.1"/>
    <property type="gene ID" value="ENSSSCG00035034484.1"/>
</dbReference>
<dbReference type="Ensembl" id="ENSSSCT00040085314.1">
    <property type="protein sequence ID" value="ENSSSCP00040037303.1"/>
    <property type="gene ID" value="ENSSSCG00040062625.1"/>
</dbReference>
<dbReference type="Ensembl" id="ENSSSCT00055033572.1">
    <property type="protein sequence ID" value="ENSSSCP00055026706.1"/>
    <property type="gene ID" value="ENSSSCG00055017014.1"/>
</dbReference>
<dbReference type="Ensembl" id="ENSSSCT00065047223.1">
    <property type="protein sequence ID" value="ENSSSCP00065020316.1"/>
    <property type="gene ID" value="ENSSSCG00065034699.1"/>
</dbReference>
<dbReference type="Ensembl" id="ENSSSCT00070047755.1">
    <property type="protein sequence ID" value="ENSSSCP00070040297.1"/>
    <property type="gene ID" value="ENSSSCG00070023939.1"/>
</dbReference>
<dbReference type="Ensembl" id="ENSSSCT00090047067">
    <property type="protein sequence ID" value="ENSSSCP00090029175"/>
    <property type="gene ID" value="ENSSSCG00090026646"/>
</dbReference>
<dbReference type="eggNOG" id="ENOG502TDW1">
    <property type="taxonomic scope" value="Eukaryota"/>
</dbReference>
<dbReference type="GeneTree" id="ENSGT00940000163158"/>
<dbReference type="HOGENOM" id="CLU_178161_0_0_1"/>
<dbReference type="InParanoid" id="P83106"/>
<dbReference type="OMA" id="FRCCHDS"/>
<dbReference type="TreeFam" id="TF337781"/>
<dbReference type="Proteomes" id="UP000008227">
    <property type="component" value="Chromosome 9"/>
</dbReference>
<dbReference type="Proteomes" id="UP000314985">
    <property type="component" value="Chromosome 9"/>
</dbReference>
<dbReference type="Proteomes" id="UP000694570">
    <property type="component" value="Unplaced"/>
</dbReference>
<dbReference type="Proteomes" id="UP000694571">
    <property type="component" value="Unplaced"/>
</dbReference>
<dbReference type="Proteomes" id="UP000694720">
    <property type="component" value="Unplaced"/>
</dbReference>
<dbReference type="Proteomes" id="UP000694722">
    <property type="component" value="Unplaced"/>
</dbReference>
<dbReference type="Proteomes" id="UP000694723">
    <property type="component" value="Unplaced"/>
</dbReference>
<dbReference type="Proteomes" id="UP000694724">
    <property type="component" value="Unplaced"/>
</dbReference>
<dbReference type="Proteomes" id="UP000694725">
    <property type="component" value="Unplaced"/>
</dbReference>
<dbReference type="Proteomes" id="UP000694726">
    <property type="component" value="Unplaced"/>
</dbReference>
<dbReference type="Proteomes" id="UP000694727">
    <property type="component" value="Unplaced"/>
</dbReference>
<dbReference type="Proteomes" id="UP000694728">
    <property type="component" value="Unplaced"/>
</dbReference>
<dbReference type="Bgee" id="ENSSSCG00000015217">
    <property type="expression patterns" value="Expressed in oocyte and 5 other cell types or tissues"/>
</dbReference>
<dbReference type="ExpressionAtlas" id="P83106">
    <property type="expression patterns" value="baseline"/>
</dbReference>
<dbReference type="GO" id="GO:0005576">
    <property type="term" value="C:extracellular region"/>
    <property type="evidence" value="ECO:0007669"/>
    <property type="project" value="UniProtKB-SubCell"/>
</dbReference>
<dbReference type="CDD" id="cd23628">
    <property type="entry name" value="TFP_LU_ECD_SP10_like"/>
    <property type="match status" value="1"/>
</dbReference>
<dbReference type="InterPro" id="IPR016054">
    <property type="entry name" value="LY6_UPA_recep-like"/>
</dbReference>
<dbReference type="Pfam" id="PF00021">
    <property type="entry name" value="UPAR_LY6"/>
    <property type="match status" value="1"/>
</dbReference>
<reference key="1">
    <citation type="submission" date="2001-06" db="EMBL/GenBank/DDBJ databases">
        <title>Design and use of two pooled tissue normalized cDNA libraries for EST discovery in swine.</title>
        <authorList>
            <person name="Fahrenkrug S.C."/>
            <person name="Freking B.A."/>
            <person name="Rohrer G.A."/>
            <person name="Smith T.P.L."/>
            <person name="Casas E."/>
            <person name="Stone R.T."/>
            <person name="Heaton M.P."/>
            <person name="Grosse W.M."/>
            <person name="Bennett G.A."/>
            <person name="Laegreid W.W."/>
            <person name="Keele J.W."/>
        </authorList>
    </citation>
    <scope>NUCLEOTIDE SEQUENCE [MRNA]</scope>
    <source>
        <tissue>Embryo</tissue>
    </source>
</reference>
<reference key="2">
    <citation type="journal article" date="2002" name="Proteomics">
        <title>The characterisation of novel secreted Ly-6 proteins from rat urine by the combined use of two-dimensional gel electrophoresis, microbore high performance liquid chromatography and expressed sequence tag data.</title>
        <authorList>
            <person name="Southan C."/>
            <person name="Cutler P."/>
            <person name="Birrell H."/>
            <person name="Connell J."/>
            <person name="Fantom K.G.M."/>
            <person name="Sims M."/>
            <person name="Shaikh N."/>
            <person name="Schneider K."/>
        </authorList>
    </citation>
    <scope>IDENTIFICATION</scope>
</reference>
<evidence type="ECO:0000255" key="1"/>
<evidence type="ECO:0000303" key="2">
    <source>
    </source>
</evidence>
<evidence type="ECO:0000305" key="3"/>
<sequence length="101" mass="11187">MGKCLLLPLLLVVLSSLLGFPQALECFQCQRVSASGVCESGKSFCQTQGSQQCFLRKVYEGDTVSYGHQGCSSLCVPMKFFRPNVTVDFRCCHDSPFCNKF</sequence>